<feature type="signal peptide" evidence="2">
    <location>
        <begin position="1"/>
        <end position="19"/>
    </location>
</feature>
<feature type="propeptide" id="PRO_0000398510" evidence="3">
    <location>
        <begin position="20"/>
        <end position="39"/>
    </location>
</feature>
<feature type="peptide" id="PRO_0000398511" description="U4-theraphotoxin-Cg1a">
    <location>
        <begin position="40"/>
        <end position="74"/>
    </location>
</feature>
<feature type="disulfide bond" evidence="1">
    <location>
        <begin position="42"/>
        <end position="56"/>
    </location>
</feature>
<feature type="disulfide bond" evidence="1">
    <location>
        <begin position="49"/>
        <end position="61"/>
    </location>
</feature>
<feature type="disulfide bond" evidence="1">
    <location>
        <begin position="55"/>
        <end position="71"/>
    </location>
</feature>
<dbReference type="EMBL" id="EU233841">
    <property type="protein sequence ID" value="ABY71660.1"/>
    <property type="molecule type" value="mRNA"/>
</dbReference>
<dbReference type="SMR" id="B1P1B0"/>
<dbReference type="ArachnoServer" id="AS000790">
    <property type="toxin name" value="U4-theraphotoxin-Cg1a"/>
</dbReference>
<dbReference type="GO" id="GO:0005576">
    <property type="term" value="C:extracellular region"/>
    <property type="evidence" value="ECO:0007669"/>
    <property type="project" value="UniProtKB-SubCell"/>
</dbReference>
<dbReference type="GO" id="GO:0099106">
    <property type="term" value="F:ion channel regulator activity"/>
    <property type="evidence" value="ECO:0007669"/>
    <property type="project" value="UniProtKB-KW"/>
</dbReference>
<dbReference type="GO" id="GO:0090729">
    <property type="term" value="F:toxin activity"/>
    <property type="evidence" value="ECO:0007669"/>
    <property type="project" value="UniProtKB-KW"/>
</dbReference>
<sequence>MNATIFALLLLLNLAMYNAAEQSSETDMDDTLLIPEINRGRCIEEGKWCPKKAPCCGRLECKGPSPKQKKCTRP</sequence>
<evidence type="ECO:0000250" key="1"/>
<evidence type="ECO:0000255" key="2"/>
<evidence type="ECO:0000269" key="3">
    <source>
    </source>
</evidence>
<comment type="function">
    <text>Probable ion channel inhibitor.</text>
</comment>
<comment type="subcellular location">
    <subcellularLocation>
        <location>Secreted</location>
    </subcellularLocation>
</comment>
<comment type="tissue specificity">
    <text>Expressed by the venom gland.</text>
</comment>
<comment type="domain">
    <text evidence="1">The presence of a 'disulfide through disulfide knot' structurally defines this protein as a knottin.</text>
</comment>
<comment type="mass spectrometry">
    <text>Monoisotopic mass.</text>
</comment>
<comment type="similarity">
    <text>Belongs to the neurotoxin 36 family. 01 subfamily.</text>
</comment>
<accession>B1P1B0</accession>
<keyword id="KW-0903">Direct protein sequencing</keyword>
<keyword id="KW-1015">Disulfide bond</keyword>
<keyword id="KW-0872">Ion channel impairing toxin</keyword>
<keyword id="KW-0960">Knottin</keyword>
<keyword id="KW-0964">Secreted</keyword>
<keyword id="KW-0732">Signal</keyword>
<keyword id="KW-0800">Toxin</keyword>
<proteinExistence type="evidence at protein level"/>
<organism>
    <name type="scientific">Chilobrachys guangxiensis</name>
    <name type="common">Chinese earth tiger tarantula</name>
    <name type="synonym">Chilobrachys jingzhao</name>
    <dbReference type="NCBI Taxonomy" id="278060"/>
    <lineage>
        <taxon>Eukaryota</taxon>
        <taxon>Metazoa</taxon>
        <taxon>Ecdysozoa</taxon>
        <taxon>Arthropoda</taxon>
        <taxon>Chelicerata</taxon>
        <taxon>Arachnida</taxon>
        <taxon>Araneae</taxon>
        <taxon>Mygalomorphae</taxon>
        <taxon>Theraphosidae</taxon>
        <taxon>Chilobrachys</taxon>
    </lineage>
</organism>
<name>JZ50A_CHIGU</name>
<protein>
    <recommendedName>
        <fullName>U4-theraphotoxin-Cg1a</fullName>
        <shortName>U4-TRTX-Cg1a</shortName>
    </recommendedName>
    <alternativeName>
        <fullName>Jingzhaotoxin-50</fullName>
        <shortName>JZTX-50</shortName>
    </alternativeName>
    <alternativeName>
        <fullName>Peptide F7-7.25</fullName>
    </alternativeName>
</protein>
<reference key="1">
    <citation type="journal article" date="2008" name="Cell. Mol. Life Sci.">
        <title>Molecular diversity and evolution of cystine knot toxins of the tarantula Chilobrachys jingzhao.</title>
        <authorList>
            <person name="Chen J."/>
            <person name="Deng M."/>
            <person name="He Q."/>
            <person name="Meng E."/>
            <person name="Jiang L."/>
            <person name="Liao Z."/>
            <person name="Rong M."/>
            <person name="Liang S."/>
        </authorList>
    </citation>
    <scope>NUCLEOTIDE SEQUENCE [LARGE SCALE MRNA]</scope>
    <source>
        <tissue>Venom gland</tissue>
    </source>
</reference>
<reference key="2">
    <citation type="journal article" date="2007" name="Proteomics">
        <title>Proteomic and peptidomic analysis of the venom from Chinese tarantula Chilobrachys jingzhao.</title>
        <authorList>
            <person name="Liao Z."/>
            <person name="Cao J."/>
            <person name="Li S."/>
            <person name="Yan X."/>
            <person name="Hu W."/>
            <person name="He Q."/>
            <person name="Chen J."/>
            <person name="Tang J."/>
            <person name="Xie J."/>
            <person name="Liang S."/>
        </authorList>
    </citation>
    <scope>PROTEIN SEQUENCE OF 40-74</scope>
    <scope>MASS SPECTROMETRY</scope>
    <source>
        <tissue>Venom</tissue>
    </source>
</reference>